<dbReference type="EC" id="3.6.4.12"/>
<dbReference type="EMBL" id="AB024024">
    <property type="status" value="NOT_ANNOTATED_CDS"/>
    <property type="molecule type" value="Genomic_DNA"/>
</dbReference>
<dbReference type="EMBL" id="CP002688">
    <property type="protein sequence ID" value="AED95141.1"/>
    <property type="molecule type" value="Genomic_DNA"/>
</dbReference>
<dbReference type="RefSeq" id="NP_680393.1">
    <property type="nucleotide sequence ID" value="NM_148088.2"/>
</dbReference>
<dbReference type="SMR" id="F4KAB8"/>
<dbReference type="BioGRID" id="19742">
    <property type="interactions" value="16"/>
</dbReference>
<dbReference type="FunCoup" id="F4KAB8">
    <property type="interactions" value="3074"/>
</dbReference>
<dbReference type="IntAct" id="F4KAB8">
    <property type="interactions" value="15"/>
</dbReference>
<dbReference type="MINT" id="F4KAB8"/>
<dbReference type="STRING" id="3702.F4KAB8"/>
<dbReference type="iPTMnet" id="F4KAB8"/>
<dbReference type="PaxDb" id="3702-AT5G44635.1"/>
<dbReference type="ProteomicsDB" id="250827"/>
<dbReference type="EnsemblPlants" id="AT5G44635.1">
    <property type="protein sequence ID" value="AT5G44635.1"/>
    <property type="gene ID" value="AT5G44635"/>
</dbReference>
<dbReference type="GeneID" id="834492"/>
<dbReference type="Gramene" id="AT5G44635.1">
    <property type="protein sequence ID" value="AT5G44635.1"/>
    <property type="gene ID" value="AT5G44635"/>
</dbReference>
<dbReference type="KEGG" id="ath:AT5G44635"/>
<dbReference type="Araport" id="AT5G44635"/>
<dbReference type="TAIR" id="AT5G44635">
    <property type="gene designation" value="MCM6"/>
</dbReference>
<dbReference type="eggNOG" id="KOG0480">
    <property type="taxonomic scope" value="Eukaryota"/>
</dbReference>
<dbReference type="HOGENOM" id="CLU_000995_3_2_1"/>
<dbReference type="InParanoid" id="F4KAB8"/>
<dbReference type="OMA" id="RHQQTDK"/>
<dbReference type="PhylomeDB" id="F4KAB8"/>
<dbReference type="PRO" id="PR:F4KAB8"/>
<dbReference type="Proteomes" id="UP000006548">
    <property type="component" value="Chromosome 5"/>
</dbReference>
<dbReference type="ExpressionAtlas" id="F4KAB8">
    <property type="expression patterns" value="baseline and differential"/>
</dbReference>
<dbReference type="GO" id="GO:0042555">
    <property type="term" value="C:MCM complex"/>
    <property type="evidence" value="ECO:0007669"/>
    <property type="project" value="InterPro"/>
</dbReference>
<dbReference type="GO" id="GO:0000347">
    <property type="term" value="C:THO complex"/>
    <property type="evidence" value="ECO:0000314"/>
    <property type="project" value="UniProtKB"/>
</dbReference>
<dbReference type="GO" id="GO:0005524">
    <property type="term" value="F:ATP binding"/>
    <property type="evidence" value="ECO:0007669"/>
    <property type="project" value="UniProtKB-KW"/>
</dbReference>
<dbReference type="GO" id="GO:0016887">
    <property type="term" value="F:ATP hydrolysis activity"/>
    <property type="evidence" value="ECO:0007669"/>
    <property type="project" value="RHEA"/>
</dbReference>
<dbReference type="GO" id="GO:0003677">
    <property type="term" value="F:DNA binding"/>
    <property type="evidence" value="ECO:0007669"/>
    <property type="project" value="UniProtKB-KW"/>
</dbReference>
<dbReference type="GO" id="GO:0003678">
    <property type="term" value="F:DNA helicase activity"/>
    <property type="evidence" value="ECO:0007669"/>
    <property type="project" value="InterPro"/>
</dbReference>
<dbReference type="GO" id="GO:0008270">
    <property type="term" value="F:zinc ion binding"/>
    <property type="evidence" value="ECO:0007669"/>
    <property type="project" value="UniProtKB-KW"/>
</dbReference>
<dbReference type="GO" id="GO:0006270">
    <property type="term" value="P:DNA replication initiation"/>
    <property type="evidence" value="ECO:0007669"/>
    <property type="project" value="InterPro"/>
</dbReference>
<dbReference type="CDD" id="cd17757">
    <property type="entry name" value="MCM6"/>
    <property type="match status" value="1"/>
</dbReference>
<dbReference type="FunFam" id="1.20.58.870:FF:000003">
    <property type="entry name" value="DNA helicase"/>
    <property type="match status" value="1"/>
</dbReference>
<dbReference type="FunFam" id="2.20.28.10:FF:000003">
    <property type="entry name" value="DNA helicase"/>
    <property type="match status" value="1"/>
</dbReference>
<dbReference type="FunFam" id="3.40.50.300:FF:000115">
    <property type="entry name" value="DNA helicase"/>
    <property type="match status" value="1"/>
</dbReference>
<dbReference type="Gene3D" id="1.20.58.870">
    <property type="match status" value="1"/>
</dbReference>
<dbReference type="Gene3D" id="2.20.28.10">
    <property type="match status" value="1"/>
</dbReference>
<dbReference type="Gene3D" id="3.30.1640.10">
    <property type="entry name" value="mini-chromosome maintenance (MCM) complex, chain A, domain 1"/>
    <property type="match status" value="1"/>
</dbReference>
<dbReference type="Gene3D" id="2.40.50.140">
    <property type="entry name" value="Nucleic acid-binding proteins"/>
    <property type="match status" value="1"/>
</dbReference>
<dbReference type="Gene3D" id="3.40.50.300">
    <property type="entry name" value="P-loop containing nucleotide triphosphate hydrolases"/>
    <property type="match status" value="1"/>
</dbReference>
<dbReference type="InterPro" id="IPR031327">
    <property type="entry name" value="MCM"/>
</dbReference>
<dbReference type="InterPro" id="IPR008049">
    <property type="entry name" value="MCM6"/>
</dbReference>
<dbReference type="InterPro" id="IPR041024">
    <property type="entry name" value="Mcm6_C"/>
</dbReference>
<dbReference type="InterPro" id="IPR018525">
    <property type="entry name" value="MCM_CS"/>
</dbReference>
<dbReference type="InterPro" id="IPR001208">
    <property type="entry name" value="MCM_dom"/>
</dbReference>
<dbReference type="InterPro" id="IPR041562">
    <property type="entry name" value="MCM_lid"/>
</dbReference>
<dbReference type="InterPro" id="IPR027925">
    <property type="entry name" value="MCM_N"/>
</dbReference>
<dbReference type="InterPro" id="IPR033762">
    <property type="entry name" value="MCM_OB"/>
</dbReference>
<dbReference type="InterPro" id="IPR012340">
    <property type="entry name" value="NA-bd_OB-fold"/>
</dbReference>
<dbReference type="InterPro" id="IPR027417">
    <property type="entry name" value="P-loop_NTPase"/>
</dbReference>
<dbReference type="PANTHER" id="PTHR11630">
    <property type="entry name" value="DNA REPLICATION LICENSING FACTOR MCM FAMILY MEMBER"/>
    <property type="match status" value="1"/>
</dbReference>
<dbReference type="PANTHER" id="PTHR11630:SF43">
    <property type="entry name" value="DNA REPLICATION LICENSING FACTOR MCM6"/>
    <property type="match status" value="1"/>
</dbReference>
<dbReference type="Pfam" id="PF00493">
    <property type="entry name" value="MCM"/>
    <property type="match status" value="1"/>
</dbReference>
<dbReference type="Pfam" id="PF18263">
    <property type="entry name" value="MCM6_C"/>
    <property type="match status" value="1"/>
</dbReference>
<dbReference type="Pfam" id="PF17855">
    <property type="entry name" value="MCM_lid"/>
    <property type="match status" value="1"/>
</dbReference>
<dbReference type="Pfam" id="PF14551">
    <property type="entry name" value="MCM_N"/>
    <property type="match status" value="1"/>
</dbReference>
<dbReference type="Pfam" id="PF17207">
    <property type="entry name" value="MCM_OB"/>
    <property type="match status" value="1"/>
</dbReference>
<dbReference type="PRINTS" id="PR01657">
    <property type="entry name" value="MCMFAMILY"/>
</dbReference>
<dbReference type="PRINTS" id="PR01662">
    <property type="entry name" value="MCMPROTEIN6"/>
</dbReference>
<dbReference type="SMART" id="SM00350">
    <property type="entry name" value="MCM"/>
    <property type="match status" value="1"/>
</dbReference>
<dbReference type="SUPFAM" id="SSF50249">
    <property type="entry name" value="Nucleic acid-binding proteins"/>
    <property type="match status" value="1"/>
</dbReference>
<dbReference type="SUPFAM" id="SSF52540">
    <property type="entry name" value="P-loop containing nucleoside triphosphate hydrolases"/>
    <property type="match status" value="1"/>
</dbReference>
<dbReference type="PROSITE" id="PS00847">
    <property type="entry name" value="MCM_1"/>
    <property type="match status" value="1"/>
</dbReference>
<dbReference type="PROSITE" id="PS50051">
    <property type="entry name" value="MCM_2"/>
    <property type="match status" value="1"/>
</dbReference>
<sequence>MEAFGGFVMDEQAIQVENVFLEFLKSFRLDANKPELYYEAEIEAIRGGESTMMYIDFSHVMGFNDALQKAIADEYLRFEPYLRNACKRFVIEMNPSFISDDTPNKDINVSFYNLPFTKRLRELTTAEIGKLVSVTGVVTRTSEVRPELLYGTFKCLDCGSVIKNVEQQFKYTQPTICVSPTCLNRARWALLRQESKFADWQRVRMQETSKEIPAGSLPRSLDVILRHEIVEQARAGDTVIFTGTVVVIPDISALAAPGERAECRRDSSQQKSSTAGHEGVQGLKALGVRDLSYRLAFIANSVQIADGSRNTDMRNRQNDSNEDDQQQFTAEELDEIQQMRNTPDYFNKLVGSMAPTVFGHQDIKRAVLLMLLGGVHKTTHEGINLRGDINVCIVGDPSCAKSQFLKYTAGIVPRSVYTSGKSSSAAGLTATVAKEPETGEFCIEAGALMLADNGICCIDEFDKMDIKDQVAIHEAMEQQTISITKAGIQATLNARTSILAAANPVGGRYDKSKPLKYNVNLPPAILSRFDLVYVMIDDPDEVTDYHIAHHIVRVHQKHEAALSPEFTTVQLKRYIAYAKTLKPKLSPEARKLLVESYVALRRGDTTPGTRVAYRMTVRQLEALIRLSEAIARSHLEILVKPSHVLLAVRLLKTSVISVESGDIDLSEYQDANGDNMDDTDDIENPVDGEEDQQNGAAEPASATADNGAAAQKLVISEEEYDRITQALVIRLRQHEETVNKDSSELPGIRQKELIRWFIDQQNEKKKYSSQEQVKLDIKKLRAIIESLVCKEGHLIVLANEQEEAAEAEETKKKSSQRDERILAVAPNYVIE</sequence>
<reference key="1">
    <citation type="submission" date="1999-03" db="EMBL/GenBank/DDBJ databases">
        <title>Structural analysis of Arabidopsis thaliana chromosome 5. XI.</title>
        <authorList>
            <person name="Kaneko T."/>
            <person name="Katoh T."/>
            <person name="Asamizu E."/>
            <person name="Sato S."/>
            <person name="Nakamura Y."/>
            <person name="Kotani H."/>
            <person name="Tabata S."/>
        </authorList>
    </citation>
    <scope>NUCLEOTIDE SEQUENCE [LARGE SCALE GENOMIC DNA]</scope>
    <source>
        <strain>cv. Columbia</strain>
    </source>
</reference>
<reference key="2">
    <citation type="journal article" date="2017" name="Plant J.">
        <title>Araport11: a complete reannotation of the Arabidopsis thaliana reference genome.</title>
        <authorList>
            <person name="Cheng C.Y."/>
            <person name="Krishnakumar V."/>
            <person name="Chan A.P."/>
            <person name="Thibaud-Nissen F."/>
            <person name="Schobel S."/>
            <person name="Town C.D."/>
        </authorList>
    </citation>
    <scope>GENOME REANNOTATION</scope>
    <source>
        <strain>cv. Columbia</strain>
    </source>
</reference>
<reference key="3">
    <citation type="journal article" date="2007" name="Plant Physiol.">
        <title>Genome-wide analysis of the core DNA replication machinery in the higher plants Arabidopsis and rice.</title>
        <authorList>
            <person name="Shultz R.W."/>
            <person name="Tatineni V.M."/>
            <person name="Hanley-Bowdoin L."/>
            <person name="Thompson W.F."/>
        </authorList>
    </citation>
    <scope>GENE FAMILY</scope>
</reference>
<reference key="4">
    <citation type="journal article" date="2008" name="EMBO J.">
        <title>The DNA replication checkpoint aids survival of plants deficient in the novel replisome factor ETG1.</title>
        <authorList>
            <person name="Takahashi N."/>
            <person name="Lammens T."/>
            <person name="Boudolf V."/>
            <person name="Maes S."/>
            <person name="Yoshizumi T."/>
            <person name="De Jaeger G."/>
            <person name="Witters E."/>
            <person name="Inze D."/>
            <person name="De Veylder L."/>
        </authorList>
    </citation>
    <scope>SUBUNIT</scope>
    <scope>INTERACTION WITH ETG1</scope>
</reference>
<reference key="5">
    <citation type="journal article" date="2009" name="Plant Physiol.">
        <title>Dynamic localization of the DNA replication proteins MCM5 and MCM7 in plants.</title>
        <authorList>
            <person name="Shultz R.W."/>
            <person name="Lee T.J."/>
            <person name="Allen G.C."/>
            <person name="Thompson W.F."/>
            <person name="Hanley-Bowdoin L."/>
        </authorList>
    </citation>
    <scope>TISSUE SPECIFICITY</scope>
</reference>
<proteinExistence type="evidence at protein level"/>
<protein>
    <recommendedName>
        <fullName>DNA replication licensing factor MCM6</fullName>
        <ecNumber>3.6.4.12</ecNumber>
    </recommendedName>
    <alternativeName>
        <fullName>Minichromosome maintenance protein 6</fullName>
        <shortName>AtMCM6</shortName>
    </alternativeName>
</protein>
<feature type="chain" id="PRO_0000425996" description="DNA replication licensing factor MCM6">
    <location>
        <begin position="1"/>
        <end position="831"/>
    </location>
</feature>
<feature type="domain" description="MCM">
    <location>
        <begin position="345"/>
        <end position="551"/>
    </location>
</feature>
<feature type="zinc finger region" description="C4-type" evidence="2">
    <location>
        <begin position="155"/>
        <end position="182"/>
    </location>
</feature>
<feature type="region of interest" description="Disordered" evidence="3">
    <location>
        <begin position="258"/>
        <end position="278"/>
    </location>
</feature>
<feature type="region of interest" description="Disordered" evidence="3">
    <location>
        <begin position="666"/>
        <end position="705"/>
    </location>
</feature>
<feature type="short sequence motif" description="Arginine finger">
    <location>
        <begin position="527"/>
        <end position="530"/>
    </location>
</feature>
<feature type="compositionally biased region" description="Basic and acidic residues" evidence="3">
    <location>
        <begin position="259"/>
        <end position="268"/>
    </location>
</feature>
<feature type="compositionally biased region" description="Acidic residues" evidence="3">
    <location>
        <begin position="675"/>
        <end position="692"/>
    </location>
</feature>
<feature type="binding site" evidence="1">
    <location>
        <begin position="395"/>
        <end position="402"/>
    </location>
    <ligand>
        <name>ATP</name>
        <dbReference type="ChEBI" id="CHEBI:30616"/>
    </ligand>
</feature>
<name>MCM6_ARATH</name>
<comment type="function">
    <text evidence="1">Probable component of the MCM2-7 complex (MCM complex) that may function as a DNA helicase and which is essential to undergo a single round of replication initiation and elongation per cell cycle in eukaryotic cells.</text>
</comment>
<comment type="catalytic activity">
    <reaction>
        <text>ATP + H2O = ADP + phosphate + H(+)</text>
        <dbReference type="Rhea" id="RHEA:13065"/>
        <dbReference type="ChEBI" id="CHEBI:15377"/>
        <dbReference type="ChEBI" id="CHEBI:15378"/>
        <dbReference type="ChEBI" id="CHEBI:30616"/>
        <dbReference type="ChEBI" id="CHEBI:43474"/>
        <dbReference type="ChEBI" id="CHEBI:456216"/>
        <dbReference type="EC" id="3.6.4.12"/>
    </reaction>
</comment>
<comment type="subunit">
    <text evidence="4">Component of the minichromosome maintenance (MCM) complex, a heterotetramer composed of MCM2, MCM3, MCM4, MCM5, MCM6 and MCM7. Interacts with ETG1.</text>
</comment>
<comment type="subcellular location">
    <subcellularLocation>
        <location evidence="6">Nucleus</location>
    </subcellularLocation>
</comment>
<comment type="tissue specificity">
    <text evidence="5">Expressed in shoot apex and flower buds.</text>
</comment>
<comment type="similarity">
    <text evidence="6">Belongs to the MCM family.</text>
</comment>
<evidence type="ECO:0000250" key="1"/>
<evidence type="ECO:0000255" key="2"/>
<evidence type="ECO:0000256" key="3">
    <source>
        <dbReference type="SAM" id="MobiDB-lite"/>
    </source>
</evidence>
<evidence type="ECO:0000269" key="4">
    <source>
    </source>
</evidence>
<evidence type="ECO:0000269" key="5">
    <source>
    </source>
</evidence>
<evidence type="ECO:0000305" key="6"/>
<keyword id="KW-0067">ATP-binding</keyword>
<keyword id="KW-0131">Cell cycle</keyword>
<keyword id="KW-0235">DNA replication</keyword>
<keyword id="KW-0238">DNA-binding</keyword>
<keyword id="KW-0347">Helicase</keyword>
<keyword id="KW-0378">Hydrolase</keyword>
<keyword id="KW-0479">Metal-binding</keyword>
<keyword id="KW-0547">Nucleotide-binding</keyword>
<keyword id="KW-0539">Nucleus</keyword>
<keyword id="KW-1185">Reference proteome</keyword>
<keyword id="KW-0862">Zinc</keyword>
<keyword id="KW-0863">Zinc-finger</keyword>
<gene>
    <name type="primary">MCM6</name>
    <name type="ordered locus">At5g44635</name>
    <name type="ORF">K15C23</name>
</gene>
<accession>F4KAB8</accession>
<organism>
    <name type="scientific">Arabidopsis thaliana</name>
    <name type="common">Mouse-ear cress</name>
    <dbReference type="NCBI Taxonomy" id="3702"/>
    <lineage>
        <taxon>Eukaryota</taxon>
        <taxon>Viridiplantae</taxon>
        <taxon>Streptophyta</taxon>
        <taxon>Embryophyta</taxon>
        <taxon>Tracheophyta</taxon>
        <taxon>Spermatophyta</taxon>
        <taxon>Magnoliopsida</taxon>
        <taxon>eudicotyledons</taxon>
        <taxon>Gunneridae</taxon>
        <taxon>Pentapetalae</taxon>
        <taxon>rosids</taxon>
        <taxon>malvids</taxon>
        <taxon>Brassicales</taxon>
        <taxon>Brassicaceae</taxon>
        <taxon>Camelineae</taxon>
        <taxon>Arabidopsis</taxon>
    </lineage>
</organism>